<organism>
    <name type="scientific">Triticum aestivum</name>
    <name type="common">Wheat</name>
    <dbReference type="NCBI Taxonomy" id="4565"/>
    <lineage>
        <taxon>Eukaryota</taxon>
        <taxon>Viridiplantae</taxon>
        <taxon>Streptophyta</taxon>
        <taxon>Embryophyta</taxon>
        <taxon>Tracheophyta</taxon>
        <taxon>Spermatophyta</taxon>
        <taxon>Magnoliopsida</taxon>
        <taxon>Liliopsida</taxon>
        <taxon>Poales</taxon>
        <taxon>Poaceae</taxon>
        <taxon>BOP clade</taxon>
        <taxon>Pooideae</taxon>
        <taxon>Triticodae</taxon>
        <taxon>Triticeae</taxon>
        <taxon>Triticinae</taxon>
        <taxon>Triticum</taxon>
    </lineage>
</organism>
<sequence length="787" mass="86580">MTTDQPVISLRPGGGGGGPRGGRLFAPAFAVAASGSGDFLRPHGGGAFRALQDWCLHLSHERVRYSRDQLLDLRKITDVTEQILRLQQEIEAELHGDDQSWVRNDSNVQLQTQTQTQVQAQNRFTETDNRDWRARTEKPPAPAVPEEKSWDNIREVKEQYNASGRQQEQFNRQDQSSSQKAQVGPPPALIKADVPWSARRGNLSEKDRVLKTVKGILNKLTPEKFDLLKGELLDSGITTADILKDVISLIFEKAVFEPTFCPMYAQLCSELNDNLPKFPSEEPGGKEITFKRVLLNNCQEAFEGADSLRVEIASLTGPDQEMEKRDKERIFKLRTLGNIRLIGELLKQKMVPEKIVHHIVKELLGSDKKACPDEEHVEAICQFFNTIGKQLDENPKSRRINDTYFVHLRELVANPQLTPRSKFMVRDLIDLRSNNWVPRRAEIKAKTISEIHTEAEKNLGLRPGATANMRNGRNAPGGPLSPGGFSVNRPGTGGMMPGMPGSRKMPGMPGLDNDNWEVQRSRSMPRGDPLRNQGSLINKVSSINKPSPINPRLLPQGTGALIGKSALLGTGGPPSRPSSITASPTPLPAQTTASPKPSSATPASVPIPDKAASSAKVIPAGLEKKTASLLEEYFGIRILDEAQQCIEELQSPDYHPEIVKEAINLALDKGASFVDPLVKLLEHLYTKKTFKTEDLENGCLLYGSLLEDIGIDLPKAPTQFGEVIARLILSCGLRFEAVEGILKAMEDTFFRKAIFTSVTKTLEADPAGQAILSSHAAVVDACNSLSI</sequence>
<proteinExistence type="evidence at transcript level"/>
<comment type="subunit">
    <text evidence="1">EIF4F is a multi-subunit complex, the composition of which varies with external and internal environmental conditions. It is composed of at least EIF4A, EIF4E and EIF4G. In higher plants two isoforms of EIF4F have been identified, named isoform EIF4F and isoform EIF(iso)4F. Isoform EIF4F has subunits p220 and p26, whereas isoform EIF(iso)4F has subunits p82 and p28. Two forms of p82 have been identified, p82-34 and p82-16 (By similarity).</text>
</comment>
<comment type="similarity">
    <text evidence="4">Belongs to the eukaryotic initiation factor 4G family.</text>
</comment>
<dbReference type="EMBL" id="M95746">
    <property type="protein sequence ID" value="AAA74724.1"/>
    <property type="molecule type" value="mRNA"/>
</dbReference>
<dbReference type="SMR" id="Q41583"/>
<dbReference type="MINT" id="Q41583"/>
<dbReference type="STRING" id="4565.Q41583"/>
<dbReference type="PaxDb" id="4565-Traes_2AL_57DF7CC48.1"/>
<dbReference type="Proteomes" id="UP000019116">
    <property type="component" value="Unplaced"/>
</dbReference>
<dbReference type="ExpressionAtlas" id="Q41583">
    <property type="expression patterns" value="baseline and differential"/>
</dbReference>
<dbReference type="GO" id="GO:0016281">
    <property type="term" value="C:eukaryotic translation initiation factor 4F complex"/>
    <property type="evidence" value="ECO:0000318"/>
    <property type="project" value="GO_Central"/>
</dbReference>
<dbReference type="GO" id="GO:0003729">
    <property type="term" value="F:mRNA binding"/>
    <property type="evidence" value="ECO:0000318"/>
    <property type="project" value="GO_Central"/>
</dbReference>
<dbReference type="GO" id="GO:0003743">
    <property type="term" value="F:translation initiation factor activity"/>
    <property type="evidence" value="ECO:0000318"/>
    <property type="project" value="GO_Central"/>
</dbReference>
<dbReference type="GO" id="GO:0006417">
    <property type="term" value="P:regulation of translation"/>
    <property type="evidence" value="ECO:0007669"/>
    <property type="project" value="UniProtKB-KW"/>
</dbReference>
<dbReference type="GO" id="GO:0006413">
    <property type="term" value="P:translational initiation"/>
    <property type="evidence" value="ECO:0000318"/>
    <property type="project" value="GO_Central"/>
</dbReference>
<dbReference type="FunFam" id="1.25.40.180:FF:000027">
    <property type="entry name" value="Eukaryotic translation initiation factor isoform 4G-2"/>
    <property type="match status" value="1"/>
</dbReference>
<dbReference type="FunFam" id="1.25.40.180:FF:000036">
    <property type="entry name" value="Eukaryotic translation initiation factor isoform 4G-2"/>
    <property type="match status" value="1"/>
</dbReference>
<dbReference type="Gene3D" id="1.25.40.180">
    <property type="match status" value="2"/>
</dbReference>
<dbReference type="InterPro" id="IPR016024">
    <property type="entry name" value="ARM-type_fold"/>
</dbReference>
<dbReference type="InterPro" id="IPR003891">
    <property type="entry name" value="Initiation_fac_eIF4g_MI"/>
</dbReference>
<dbReference type="InterPro" id="IPR003890">
    <property type="entry name" value="MIF4G-like_typ-3"/>
</dbReference>
<dbReference type="PANTHER" id="PTHR23253">
    <property type="entry name" value="EUKARYOTIC TRANSLATION INITIATION FACTOR 4 GAMMA"/>
    <property type="match status" value="1"/>
</dbReference>
<dbReference type="PANTHER" id="PTHR23253:SF81">
    <property type="entry name" value="EUKARYOTIC TRANSLATION INITIATION FACTOR ISOFORM 4G-1"/>
    <property type="match status" value="1"/>
</dbReference>
<dbReference type="Pfam" id="PF02847">
    <property type="entry name" value="MA3"/>
    <property type="match status" value="1"/>
</dbReference>
<dbReference type="Pfam" id="PF02854">
    <property type="entry name" value="MIF4G"/>
    <property type="match status" value="1"/>
</dbReference>
<dbReference type="SMART" id="SM00544">
    <property type="entry name" value="MA3"/>
    <property type="match status" value="1"/>
</dbReference>
<dbReference type="SMART" id="SM00543">
    <property type="entry name" value="MIF4G"/>
    <property type="match status" value="1"/>
</dbReference>
<dbReference type="SUPFAM" id="SSF48371">
    <property type="entry name" value="ARM repeat"/>
    <property type="match status" value="2"/>
</dbReference>
<dbReference type="PROSITE" id="PS51366">
    <property type="entry name" value="MI"/>
    <property type="match status" value="1"/>
</dbReference>
<reference key="1">
    <citation type="journal article" date="1992" name="J. Biol. Chem.">
        <title>Isolation and sequence of the cDNAs encoding the subunits of the isozyme form of wheat protein synthesis initiation factor 4F.</title>
        <authorList>
            <person name="Allen M.L."/>
            <person name="Metz A.M."/>
            <person name="Timmer R.T."/>
            <person name="Rhoads R.E."/>
            <person name="Browning K.S."/>
        </authorList>
    </citation>
    <scope>NUCLEOTIDE SEQUENCE [MRNA]</scope>
    <source>
        <tissue>Root tip</tissue>
    </source>
</reference>
<protein>
    <recommendedName>
        <fullName>Eukaryotic translation initiation factor isoform 4G-2</fullName>
        <shortName>eIF(iso)-4G-2</shortName>
        <shortName>eIF(iso)4G-2</shortName>
    </recommendedName>
    <alternativeName>
        <fullName>Eukaryotic initiation factor iso-4F subunit p82-16</fullName>
        <shortName>eIF-(iso)4F p82-16 subunit</shortName>
    </alternativeName>
</protein>
<name>IF4G2_WHEAT</name>
<keyword id="KW-0396">Initiation factor</keyword>
<keyword id="KW-0648">Protein biosynthesis</keyword>
<keyword id="KW-1185">Reference proteome</keyword>
<keyword id="KW-0810">Translation regulation</keyword>
<feature type="chain" id="PRO_0000420548" description="Eukaryotic translation initiation factor isoform 4G-2">
    <location>
        <begin position="1"/>
        <end position="787"/>
    </location>
</feature>
<feature type="domain" description="MIF4G" evidence="2">
    <location>
        <begin position="210"/>
        <end position="435"/>
    </location>
</feature>
<feature type="domain" description="MI" evidence="2">
    <location>
        <begin position="621"/>
        <end position="743"/>
    </location>
</feature>
<feature type="region of interest" description="Disordered" evidence="3">
    <location>
        <begin position="1"/>
        <end position="20"/>
    </location>
</feature>
<feature type="region of interest" description="Disordered" evidence="3">
    <location>
        <begin position="112"/>
        <end position="196"/>
    </location>
</feature>
<feature type="region of interest" description="Disordered" evidence="3">
    <location>
        <begin position="514"/>
        <end position="607"/>
    </location>
</feature>
<feature type="compositionally biased region" description="Low complexity" evidence="3">
    <location>
        <begin position="112"/>
        <end position="121"/>
    </location>
</feature>
<feature type="compositionally biased region" description="Basic and acidic residues" evidence="3">
    <location>
        <begin position="125"/>
        <end position="138"/>
    </location>
</feature>
<feature type="compositionally biased region" description="Basic and acidic residues" evidence="3">
    <location>
        <begin position="145"/>
        <end position="158"/>
    </location>
</feature>
<feature type="compositionally biased region" description="Polar residues" evidence="3">
    <location>
        <begin position="160"/>
        <end position="181"/>
    </location>
</feature>
<feature type="compositionally biased region" description="Polar residues" evidence="3">
    <location>
        <begin position="532"/>
        <end position="547"/>
    </location>
</feature>
<feature type="compositionally biased region" description="Low complexity" evidence="3">
    <location>
        <begin position="588"/>
        <end position="604"/>
    </location>
</feature>
<evidence type="ECO:0000250" key="1"/>
<evidence type="ECO:0000255" key="2">
    <source>
        <dbReference type="PROSITE-ProRule" id="PRU00698"/>
    </source>
</evidence>
<evidence type="ECO:0000256" key="3">
    <source>
        <dbReference type="SAM" id="MobiDB-lite"/>
    </source>
</evidence>
<evidence type="ECO:0000305" key="4"/>
<accession>Q41583</accession>